<organism>
    <name type="scientific">Homo sapiens</name>
    <name type="common">Human</name>
    <dbReference type="NCBI Taxonomy" id="9606"/>
    <lineage>
        <taxon>Eukaryota</taxon>
        <taxon>Metazoa</taxon>
        <taxon>Chordata</taxon>
        <taxon>Craniata</taxon>
        <taxon>Vertebrata</taxon>
        <taxon>Euteleostomi</taxon>
        <taxon>Mammalia</taxon>
        <taxon>Eutheria</taxon>
        <taxon>Euarchontoglires</taxon>
        <taxon>Primates</taxon>
        <taxon>Haplorrhini</taxon>
        <taxon>Catarrhini</taxon>
        <taxon>Hominidae</taxon>
        <taxon>Homo</taxon>
    </lineage>
</organism>
<name>VATG2_HUMAN</name>
<gene>
    <name type="primary">ATP6V1G2</name>
    <name type="synonym">ATP6G</name>
    <name type="synonym">ATP6G2</name>
    <name type="synonym">NG38</name>
</gene>
<protein>
    <recommendedName>
        <fullName>V-type proton ATPase subunit G 2</fullName>
        <shortName>V-ATPase subunit G 2</shortName>
    </recommendedName>
    <alternativeName>
        <fullName>V-ATPase 13 kDa subunit 2</fullName>
    </alternativeName>
    <alternativeName>
        <fullName>Vacuolar proton pump subunit G 2</fullName>
    </alternativeName>
</protein>
<evidence type="ECO:0000250" key="1">
    <source>
        <dbReference type="UniProtKB" id="O75348"/>
    </source>
</evidence>
<evidence type="ECO:0000250" key="2">
    <source>
        <dbReference type="UniProtKB" id="Q0VCV6"/>
    </source>
</evidence>
<evidence type="ECO:0000256" key="3">
    <source>
        <dbReference type="SAM" id="MobiDB-lite"/>
    </source>
</evidence>
<evidence type="ECO:0000269" key="4">
    <source>
    </source>
</evidence>
<evidence type="ECO:0000269" key="5">
    <source>
    </source>
</evidence>
<evidence type="ECO:0000303" key="6">
    <source>
    </source>
</evidence>
<evidence type="ECO:0000303" key="7">
    <source ref="10"/>
</evidence>
<evidence type="ECO:0000305" key="8"/>
<proteinExistence type="evidence at protein level"/>
<comment type="function">
    <text evidence="1">Subunit of the V1 complex of vacuolar(H+)-ATPase (V-ATPase), a multisubunit enzyme composed of a peripheral complex (V1) that hydrolyzes ATP and a membrane integral complex (V0) that translocates protons. V-ATPase is responsible for acidifying and maintaining the pH of intracellular compartments and in some cell types, is targeted to the plasma membrane, where it is responsible for acidifying the extracellular environment.</text>
</comment>
<comment type="subunit">
    <text evidence="1">V-ATPase is a heteromultimeric enzyme made up of two complexes: the ATP-hydrolytic V1 complex and the proton translocation V0 complex. The V1 complex consists of three catalytic AB heterodimers that form a heterohexamer, three peripheral stalks each consisting of EG heterodimers, one central rotor including subunits D and F, and the regulatory subunits C and H. The proton translocation complex V0 consists of the proton transport subunit a, a ring of proteolipid subunits c9c'', rotary subunit d, subunits e and f, and the accessory subunits ATP6AP1/Ac45 and ATP6AP2/PRR.</text>
</comment>
<comment type="interaction">
    <interactant intactId="EBI-348290">
        <id>O95670</id>
    </interactant>
    <interactant intactId="EBI-8650380">
        <id>Q96A05</id>
        <label>ATP6V1E2</label>
    </interactant>
    <organismsDiffer>false</organismsDiffer>
    <experiments>6</experiments>
</comment>
<comment type="interaction">
    <interactant intactId="EBI-348290">
        <id>O95670</id>
    </interactant>
    <interactant intactId="EBI-2511991">
        <id>Q9Y2K6</id>
        <label>USP20</label>
    </interactant>
    <organismsDiffer>false</organismsDiffer>
    <experiments>3</experiments>
</comment>
<comment type="subcellular location">
    <subcellularLocation>
        <location evidence="5">Melanosome</location>
    </subcellularLocation>
    <subcellularLocation>
        <location evidence="2">Cytoplasmic vesicle</location>
        <location evidence="2">Clathrin-coated vesicle membrane</location>
        <topology evidence="8">Peripheral membrane protein</topology>
    </subcellularLocation>
    <text evidence="5">Highly enriched in late-stage melanosomes.</text>
</comment>
<comment type="alternative products">
    <event type="alternative splicing"/>
    <isoform>
        <id>O95670-1</id>
        <name>1</name>
        <sequence type="displayed"/>
    </isoform>
    <isoform>
        <id>O95670-2</id>
        <name>2</name>
        <sequence type="described" ref="VSP_045909"/>
    </isoform>
    <isoform>
        <id>O95670-3</id>
        <name>3</name>
        <sequence type="described" ref="VSP_047411"/>
    </isoform>
</comment>
<comment type="tissue specificity">
    <text evidence="4">Brain.</text>
</comment>
<comment type="similarity">
    <text evidence="8">Belongs to the V-ATPase G subunit family.</text>
</comment>
<keyword id="KW-0025">Alternative splicing</keyword>
<keyword id="KW-0968">Cytoplasmic vesicle</keyword>
<keyword id="KW-0375">Hydrogen ion transport</keyword>
<keyword id="KW-0406">Ion transport</keyword>
<keyword id="KW-0472">Membrane</keyword>
<keyword id="KW-1267">Proteomics identification</keyword>
<keyword id="KW-1185">Reference proteome</keyword>
<keyword id="KW-0813">Transport</keyword>
<feature type="chain" id="PRO_0000192900" description="V-type proton ATPase subunit G 2">
    <location>
        <begin position="1"/>
        <end position="118"/>
    </location>
</feature>
<feature type="region of interest" description="Disordered" evidence="3">
    <location>
        <begin position="25"/>
        <end position="90"/>
    </location>
</feature>
<feature type="compositionally biased region" description="Basic and acidic residues" evidence="3">
    <location>
        <begin position="35"/>
        <end position="56"/>
    </location>
</feature>
<feature type="compositionally biased region" description="Polar residues" evidence="3">
    <location>
        <begin position="57"/>
        <end position="69"/>
    </location>
</feature>
<feature type="compositionally biased region" description="Polar residues" evidence="3">
    <location>
        <begin position="78"/>
        <end position="89"/>
    </location>
</feature>
<feature type="splice variant" id="VSP_047411" description="In isoform 3." evidence="7">
    <location>
        <begin position="1"/>
        <end position="41"/>
    </location>
</feature>
<feature type="splice variant" id="VSP_045909" description="In isoform 2." evidence="6">
    <location>
        <begin position="35"/>
        <end position="74"/>
    </location>
</feature>
<feature type="sequence conflict" description="In Ref. 10; AA401769." evidence="8" ref="10">
    <original>E</original>
    <variation>D</variation>
    <location>
        <position position="52"/>
    </location>
</feature>
<dbReference type="EMBL" id="Y14768">
    <property type="protein sequence ID" value="CAA75073.1"/>
    <property type="molecule type" value="Genomic_DNA"/>
</dbReference>
<dbReference type="EMBL" id="AB063177">
    <property type="protein sequence ID" value="BAC00863.1"/>
    <property type="molecule type" value="Genomic_DNA"/>
</dbReference>
<dbReference type="EMBL" id="AB102692">
    <property type="protein sequence ID" value="BAD74058.1"/>
    <property type="molecule type" value="Genomic_DNA"/>
</dbReference>
<dbReference type="EMBL" id="AB097672">
    <property type="protein sequence ID" value="BAD74057.1"/>
    <property type="molecule type" value="Genomic_DNA"/>
</dbReference>
<dbReference type="EMBL" id="BA000025">
    <property type="protein sequence ID" value="BAB63399.1"/>
    <property type="molecule type" value="Genomic_DNA"/>
</dbReference>
<dbReference type="EMBL" id="AB088115">
    <property type="protein sequence ID" value="BAC54952.1"/>
    <property type="molecule type" value="Genomic_DNA"/>
</dbReference>
<dbReference type="EMBL" id="AL662801">
    <property type="status" value="NOT_ANNOTATED_CDS"/>
    <property type="molecule type" value="Genomic_DNA"/>
</dbReference>
<dbReference type="EMBL" id="AL662847">
    <property type="status" value="NOT_ANNOTATED_CDS"/>
    <property type="molecule type" value="Genomic_DNA"/>
</dbReference>
<dbReference type="EMBL" id="BX001040">
    <property type="status" value="NOT_ANNOTATED_CDS"/>
    <property type="molecule type" value="Genomic_DNA"/>
</dbReference>
<dbReference type="EMBL" id="BX248516">
    <property type="status" value="NOT_ANNOTATED_CDS"/>
    <property type="molecule type" value="Genomic_DNA"/>
</dbReference>
<dbReference type="EMBL" id="CR753892">
    <property type="status" value="NOT_ANNOTATED_CDS"/>
    <property type="molecule type" value="Genomic_DNA"/>
</dbReference>
<dbReference type="EMBL" id="BX927320">
    <property type="status" value="NOT_ANNOTATED_CDS"/>
    <property type="molecule type" value="Genomic_DNA"/>
</dbReference>
<dbReference type="EMBL" id="CR753864">
    <property type="status" value="NOT_ANNOTATED_CDS"/>
    <property type="molecule type" value="Genomic_DNA"/>
</dbReference>
<dbReference type="EMBL" id="CR753820">
    <property type="status" value="NOT_ANNOTATED_CDS"/>
    <property type="molecule type" value="Genomic_DNA"/>
</dbReference>
<dbReference type="EMBL" id="CR942185">
    <property type="status" value="NOT_ANNOTATED_CDS"/>
    <property type="molecule type" value="Genomic_DNA"/>
</dbReference>
<dbReference type="EMBL" id="CH471081">
    <property type="protein sequence ID" value="EAX03414.1"/>
    <property type="molecule type" value="Genomic_DNA"/>
</dbReference>
<dbReference type="EMBL" id="CH471081">
    <property type="protein sequence ID" value="EAX03416.1"/>
    <property type="molecule type" value="Genomic_DNA"/>
</dbReference>
<dbReference type="EMBL" id="AB202112">
    <property type="protein sequence ID" value="BAE78636.1"/>
    <property type="molecule type" value="Genomic_DNA"/>
</dbReference>
<dbReference type="EMBL" id="AB103621">
    <property type="protein sequence ID" value="BAF31286.1"/>
    <property type="molecule type" value="Genomic_DNA"/>
</dbReference>
<dbReference type="EMBL" id="BC047791">
    <property type="status" value="NOT_ANNOTATED_CDS"/>
    <property type="molecule type" value="mRNA"/>
</dbReference>
<dbReference type="EMBL" id="BC119726">
    <property type="protein sequence ID" value="AAI19727.1"/>
    <property type="molecule type" value="mRNA"/>
</dbReference>
<dbReference type="EMBL" id="BC119727">
    <property type="protein sequence ID" value="AAI19728.1"/>
    <property type="molecule type" value="mRNA"/>
</dbReference>
<dbReference type="EMBL" id="AA401769">
    <property type="status" value="NOT_ANNOTATED_CDS"/>
    <property type="molecule type" value="mRNA"/>
</dbReference>
<dbReference type="CCDS" id="CCDS4698.1">
    <molecule id="O95670-1"/>
</dbReference>
<dbReference type="CCDS" id="CCDS4699.1">
    <molecule id="O95670-3"/>
</dbReference>
<dbReference type="CCDS" id="CCDS56413.1">
    <molecule id="O95670-2"/>
</dbReference>
<dbReference type="RefSeq" id="NP_001191007.1">
    <molecule id="O95670-2"/>
    <property type="nucleotide sequence ID" value="NM_001204078.2"/>
</dbReference>
<dbReference type="RefSeq" id="NP_569730.1">
    <molecule id="O95670-1"/>
    <property type="nucleotide sequence ID" value="NM_130463.4"/>
</dbReference>
<dbReference type="RefSeq" id="NP_612139.1">
    <molecule id="O95670-3"/>
    <property type="nucleotide sequence ID" value="NM_138282.3"/>
</dbReference>
<dbReference type="SMR" id="O95670"/>
<dbReference type="BioGRID" id="107017">
    <property type="interactions" value="40"/>
</dbReference>
<dbReference type="ComplexPortal" id="CPX-2470">
    <property type="entry name" value="Vacuolar proton translocating ATPase complex, ATP6V0A1 variant"/>
</dbReference>
<dbReference type="ComplexPortal" id="CPX-6904">
    <property type="entry name" value="Vacuolar proton translocating ATPase complex, ATP6V0A2 variant"/>
</dbReference>
<dbReference type="ComplexPortal" id="CPX-6905">
    <property type="entry name" value="Vacuolar proton translocating ATPase complex, ATP6V0A3 variant"/>
</dbReference>
<dbReference type="ComplexPortal" id="CPX-6912">
    <property type="entry name" value="Vacuolar proton translocating ATPase complex, ATP6V0A4 variant"/>
</dbReference>
<dbReference type="FunCoup" id="O95670">
    <property type="interactions" value="986"/>
</dbReference>
<dbReference type="IntAct" id="O95670">
    <property type="interactions" value="14"/>
</dbReference>
<dbReference type="STRING" id="9606.ENSP00000302194"/>
<dbReference type="DrugBank" id="DB01133">
    <property type="generic name" value="Tiludronic acid"/>
</dbReference>
<dbReference type="GlyGen" id="O95670">
    <property type="glycosylation" value="1 site, 1 N-linked glycan (1 site)"/>
</dbReference>
<dbReference type="iPTMnet" id="O95670"/>
<dbReference type="PhosphoSitePlus" id="O95670"/>
<dbReference type="SwissPalm" id="O95670"/>
<dbReference type="BioMuta" id="ATP6V1G2"/>
<dbReference type="jPOST" id="O95670"/>
<dbReference type="MassIVE" id="O95670"/>
<dbReference type="PaxDb" id="9606-ENSP00000302194"/>
<dbReference type="PeptideAtlas" id="O95670"/>
<dbReference type="ProteomicsDB" id="50983">
    <molecule id="O95670-1"/>
</dbReference>
<dbReference type="ProteomicsDB" id="6232"/>
<dbReference type="ProteomicsDB" id="62960"/>
<dbReference type="Antibodypedia" id="48928">
    <property type="antibodies" value="95 antibodies from 27 providers"/>
</dbReference>
<dbReference type="DNASU" id="534"/>
<dbReference type="Ensembl" id="ENST00000303892.10">
    <molecule id="O95670-1"/>
    <property type="protein sequence ID" value="ENSP00000302194.5"/>
    <property type="gene ID" value="ENSG00000213760.11"/>
</dbReference>
<dbReference type="Ensembl" id="ENST00000376151.4">
    <molecule id="O95670-2"/>
    <property type="protein sequence ID" value="ENSP00000365321.4"/>
    <property type="gene ID" value="ENSG00000213760.11"/>
</dbReference>
<dbReference type="Ensembl" id="ENST00000383503.4">
    <molecule id="O95670-1"/>
    <property type="protein sequence ID" value="ENSP00000372995.4"/>
    <property type="gene ID" value="ENSG00000206445.4"/>
</dbReference>
<dbReference type="Ensembl" id="ENST00000421596.2">
    <molecule id="O95670-2"/>
    <property type="protein sequence ID" value="ENSP00000406575.2"/>
    <property type="gene ID" value="ENSG00000234668.3"/>
</dbReference>
<dbReference type="Ensembl" id="ENST00000434217.2">
    <molecule id="O95670-2"/>
    <property type="protein sequence ID" value="ENSP00000406668.2"/>
    <property type="gene ID" value="ENSG00000226850.2"/>
</dbReference>
<dbReference type="Ensembl" id="ENST00000441959.2">
    <molecule id="O95670-1"/>
    <property type="protein sequence ID" value="ENSP00000395436.2"/>
    <property type="gene ID" value="ENSG00000227587.2"/>
</dbReference>
<dbReference type="Ensembl" id="ENST00000443657.2">
    <molecule id="O95670-2"/>
    <property type="protein sequence ID" value="ENSP00000416031.2"/>
    <property type="gene ID" value="ENSG00000227587.2"/>
</dbReference>
<dbReference type="Ensembl" id="ENST00000444088.2">
    <molecule id="O95670-1"/>
    <property type="protein sequence ID" value="ENSP00000406389.2"/>
    <property type="gene ID" value="ENSG00000234920.3"/>
</dbReference>
<dbReference type="Ensembl" id="ENST00000447174.2">
    <molecule id="O95670-2"/>
    <property type="protein sequence ID" value="ENSP00000403158.2"/>
    <property type="gene ID" value="ENSG00000230900.5"/>
</dbReference>
<dbReference type="Ensembl" id="ENST00000448779.2">
    <molecule id="O95670-2"/>
    <property type="protein sequence ID" value="ENSP00000409104.2"/>
    <property type="gene ID" value="ENSG00000234920.3"/>
</dbReference>
<dbReference type="Ensembl" id="ENST00000449748.2">
    <molecule id="O95670-1"/>
    <property type="protein sequence ID" value="ENSP00000406372.2"/>
    <property type="gene ID" value="ENSG00000226850.2"/>
</dbReference>
<dbReference type="Ensembl" id="ENST00000452453.2">
    <molecule id="O95670-2"/>
    <property type="protein sequence ID" value="ENSP00000402430.2"/>
    <property type="gene ID" value="ENSG00000206445.4"/>
</dbReference>
<dbReference type="Ensembl" id="ENST00000454370.2">
    <molecule id="O95670-1"/>
    <property type="protein sequence ID" value="ENSP00000413222.2"/>
    <property type="gene ID" value="ENSG00000234668.3"/>
</dbReference>
<dbReference type="Ensembl" id="ENST00000454889.2">
    <molecule id="O95670-1"/>
    <property type="protein sequence ID" value="ENSP00000408670.2"/>
    <property type="gene ID" value="ENSG00000230900.5"/>
</dbReference>
<dbReference type="Ensembl" id="ENST00000483251.1">
    <molecule id="O95670-3"/>
    <property type="protein sequence ID" value="ENSP00000419698.1"/>
    <property type="gene ID" value="ENSG00000213760.11"/>
</dbReference>
<dbReference type="GeneID" id="534"/>
<dbReference type="KEGG" id="hsa:534"/>
<dbReference type="MANE-Select" id="ENST00000303892.10">
    <property type="protein sequence ID" value="ENSP00000302194.5"/>
    <property type="RefSeq nucleotide sequence ID" value="NM_130463.4"/>
    <property type="RefSeq protein sequence ID" value="NP_569730.1"/>
</dbReference>
<dbReference type="UCSC" id="uc003ntz.4">
    <molecule id="O95670-1"/>
    <property type="organism name" value="human"/>
</dbReference>
<dbReference type="AGR" id="HGNC:862"/>
<dbReference type="CTD" id="534"/>
<dbReference type="DisGeNET" id="534"/>
<dbReference type="GeneCards" id="ATP6V1G2"/>
<dbReference type="HGNC" id="HGNC:862">
    <property type="gene designation" value="ATP6V1G2"/>
</dbReference>
<dbReference type="HPA" id="ENSG00000213760">
    <property type="expression patterns" value="Tissue enriched (brain)"/>
</dbReference>
<dbReference type="MIM" id="606853">
    <property type="type" value="gene"/>
</dbReference>
<dbReference type="neXtProt" id="NX_O95670"/>
<dbReference type="OpenTargets" id="ENSG00000213760"/>
<dbReference type="PharmGKB" id="PA25164"/>
<dbReference type="VEuPathDB" id="HostDB:ENSG00000213760"/>
<dbReference type="eggNOG" id="KOG1772">
    <property type="taxonomic scope" value="Eukaryota"/>
</dbReference>
<dbReference type="GeneTree" id="ENSGT00940000161280"/>
<dbReference type="HOGENOM" id="CLU_125101_1_1_1"/>
<dbReference type="InParanoid" id="O95670"/>
<dbReference type="OMA" id="EHMGSKD"/>
<dbReference type="OrthoDB" id="250802at2759"/>
<dbReference type="PAN-GO" id="O95670">
    <property type="GO annotations" value="1 GO annotation based on evolutionary models"/>
</dbReference>
<dbReference type="PhylomeDB" id="O95670"/>
<dbReference type="TreeFam" id="TF313777"/>
<dbReference type="BioCyc" id="MetaCyc:HS10685-MONOMER"/>
<dbReference type="PathwayCommons" id="O95670"/>
<dbReference type="Reactome" id="R-HSA-1222556">
    <property type="pathway name" value="ROS and RNS production in phagocytes"/>
</dbReference>
<dbReference type="Reactome" id="R-HSA-77387">
    <property type="pathway name" value="Insulin receptor recycling"/>
</dbReference>
<dbReference type="Reactome" id="R-HSA-917977">
    <property type="pathway name" value="Transferrin endocytosis and recycling"/>
</dbReference>
<dbReference type="Reactome" id="R-HSA-9639288">
    <property type="pathway name" value="Amino acids regulate mTORC1"/>
</dbReference>
<dbReference type="Reactome" id="R-HSA-983712">
    <property type="pathway name" value="Ion channel transport"/>
</dbReference>
<dbReference type="SignaLink" id="O95670"/>
<dbReference type="SIGNOR" id="O95670"/>
<dbReference type="BioGRID-ORCS" id="534">
    <property type="hits" value="15 hits in 1146 CRISPR screens"/>
</dbReference>
<dbReference type="CD-CODE" id="91857CE7">
    <property type="entry name" value="Nucleolus"/>
</dbReference>
<dbReference type="CD-CODE" id="FB4E32DD">
    <property type="entry name" value="Presynaptic clusters and postsynaptic densities"/>
</dbReference>
<dbReference type="GeneWiki" id="ATP6V1G2"/>
<dbReference type="GenomeRNAi" id="534"/>
<dbReference type="Pharos" id="O95670">
    <property type="development level" value="Tbio"/>
</dbReference>
<dbReference type="PRO" id="PR:O95670"/>
<dbReference type="Proteomes" id="UP000005640">
    <property type="component" value="Chromosome 6"/>
</dbReference>
<dbReference type="RNAct" id="O95670">
    <property type="molecule type" value="protein"/>
</dbReference>
<dbReference type="Bgee" id="ENSG00000213760">
    <property type="expression patterns" value="Expressed in cerebellar cortex and 100 other cell types or tissues"/>
</dbReference>
<dbReference type="ExpressionAtlas" id="O95670">
    <property type="expression patterns" value="baseline and differential"/>
</dbReference>
<dbReference type="GO" id="GO:0030665">
    <property type="term" value="C:clathrin-coated vesicle membrane"/>
    <property type="evidence" value="ECO:0007669"/>
    <property type="project" value="UniProtKB-SubCell"/>
</dbReference>
<dbReference type="GO" id="GO:0005829">
    <property type="term" value="C:cytosol"/>
    <property type="evidence" value="ECO:0000304"/>
    <property type="project" value="Reactome"/>
</dbReference>
<dbReference type="GO" id="GO:0098850">
    <property type="term" value="C:extrinsic component of synaptic vesicle membrane"/>
    <property type="evidence" value="ECO:0007669"/>
    <property type="project" value="Ensembl"/>
</dbReference>
<dbReference type="GO" id="GO:0042470">
    <property type="term" value="C:melanosome"/>
    <property type="evidence" value="ECO:0007669"/>
    <property type="project" value="UniProtKB-SubCell"/>
</dbReference>
<dbReference type="GO" id="GO:0030672">
    <property type="term" value="C:synaptic vesicle membrane"/>
    <property type="evidence" value="ECO:0000318"/>
    <property type="project" value="GO_Central"/>
</dbReference>
<dbReference type="GO" id="GO:0000221">
    <property type="term" value="C:vacuolar proton-transporting V-type ATPase, V1 domain"/>
    <property type="evidence" value="ECO:0000250"/>
    <property type="project" value="UniProtKB"/>
</dbReference>
<dbReference type="GO" id="GO:0016887">
    <property type="term" value="F:ATP hydrolysis activity"/>
    <property type="evidence" value="ECO:0000318"/>
    <property type="project" value="GO_Central"/>
</dbReference>
<dbReference type="GO" id="GO:0046961">
    <property type="term" value="F:proton-transporting ATPase activity, rotational mechanism"/>
    <property type="evidence" value="ECO:0000318"/>
    <property type="project" value="GO_Central"/>
</dbReference>
<dbReference type="GO" id="GO:0016241">
    <property type="term" value="P:regulation of macroautophagy"/>
    <property type="evidence" value="ECO:0000303"/>
    <property type="project" value="ParkinsonsUK-UCL"/>
</dbReference>
<dbReference type="GO" id="GO:0097401">
    <property type="term" value="P:synaptic vesicle lumen acidification"/>
    <property type="evidence" value="ECO:0000318"/>
    <property type="project" value="GO_Central"/>
</dbReference>
<dbReference type="FunFam" id="1.20.5.2950:FF:000001">
    <property type="entry name" value="V-type proton ATPase subunit G"/>
    <property type="match status" value="1"/>
</dbReference>
<dbReference type="Gene3D" id="1.20.5.2950">
    <property type="match status" value="1"/>
</dbReference>
<dbReference type="InterPro" id="IPR005124">
    <property type="entry name" value="V-ATPase_G"/>
</dbReference>
<dbReference type="NCBIfam" id="TIGR01147">
    <property type="entry name" value="V_ATP_synt_G"/>
    <property type="match status" value="1"/>
</dbReference>
<dbReference type="PANTHER" id="PTHR12713:SF13">
    <property type="entry name" value="V-TYPE PROTON ATPASE SUBUNIT G 2"/>
    <property type="match status" value="1"/>
</dbReference>
<dbReference type="PANTHER" id="PTHR12713">
    <property type="entry name" value="VACUOLAR ATP SYNTHASE SUBUNIT G"/>
    <property type="match status" value="1"/>
</dbReference>
<dbReference type="Pfam" id="PF03179">
    <property type="entry name" value="V-ATPase_G"/>
    <property type="match status" value="1"/>
</dbReference>
<reference key="1">
    <citation type="journal article" date="1999" name="J. Immunol.">
        <title>A new member of the Ig superfamily and a V-ATPase G subunit are among the predicted products of novel genes close to the TNF locus in the human MHC.</title>
        <authorList>
            <person name="Neville M.J."/>
            <person name="Campbell R.D."/>
        </authorList>
    </citation>
    <scope>NUCLEOTIDE SEQUENCE [GENOMIC DNA]</scope>
</reference>
<reference key="2">
    <citation type="submission" date="2001-06" db="EMBL/GenBank/DDBJ databases">
        <title>Genomic structure of human ATP6G gene.</title>
        <authorList>
            <person name="Iida A."/>
            <person name="Kondo K."/>
            <person name="Mishima C."/>
            <person name="Nakamura Y."/>
        </authorList>
    </citation>
    <scope>NUCLEOTIDE SEQUENCE [GENOMIC DNA]</scope>
    <source>
        <tissue>Brain</tissue>
    </source>
</reference>
<reference key="3">
    <citation type="submission" date="2002-12" db="EMBL/GenBank/DDBJ databases">
        <title>Polymorphism of ATP6G.</title>
        <authorList>
            <person name="Shichi D."/>
            <person name="Naruse T."/>
            <person name="Nakashima M."/>
            <person name="Kikkawa E."/>
            <person name="Ota M."/>
            <person name="Katsuyama Y."/>
            <person name="Kimura A."/>
            <person name="Matsumori A."/>
            <person name="Inoko H."/>
        </authorList>
    </citation>
    <scope>NUCLEOTIDE SEQUENCE [GENOMIC DNA]</scope>
</reference>
<reference key="4">
    <citation type="submission" date="1999-09" db="EMBL/GenBank/DDBJ databases">
        <title>Homo sapiens 2,229,817bp genomic DNA of 6p21.3 HLA class I region.</title>
        <authorList>
            <person name="Shiina S."/>
            <person name="Tamiya G."/>
            <person name="Oka A."/>
            <person name="Inoko H."/>
        </authorList>
    </citation>
    <scope>NUCLEOTIDE SEQUENCE [LARGE SCALE GENOMIC DNA]</scope>
</reference>
<reference key="5">
    <citation type="submission" date="2002-07" db="EMBL/GenBank/DDBJ databases">
        <title>Genome diversity in HLA: a new strategy for detection of genetic polymorphisms in expressed genes within the HLA class III and class I regions.</title>
        <authorList>
            <person name="Shiina T."/>
            <person name="Ota M."/>
            <person name="Katsuyama Y."/>
            <person name="Hashimoto N."/>
            <person name="Inoko H."/>
        </authorList>
    </citation>
    <scope>NUCLEOTIDE SEQUENCE [LARGE SCALE GENOMIC DNA]</scope>
</reference>
<reference key="6">
    <citation type="journal article" date="2003" name="Nature">
        <title>The DNA sequence and analysis of human chromosome 6.</title>
        <authorList>
            <person name="Mungall A.J."/>
            <person name="Palmer S.A."/>
            <person name="Sims S.K."/>
            <person name="Edwards C.A."/>
            <person name="Ashurst J.L."/>
            <person name="Wilming L."/>
            <person name="Jones M.C."/>
            <person name="Horton R."/>
            <person name="Hunt S.E."/>
            <person name="Scott C.E."/>
            <person name="Gilbert J.G.R."/>
            <person name="Clamp M.E."/>
            <person name="Bethel G."/>
            <person name="Milne S."/>
            <person name="Ainscough R."/>
            <person name="Almeida J.P."/>
            <person name="Ambrose K.D."/>
            <person name="Andrews T.D."/>
            <person name="Ashwell R.I.S."/>
            <person name="Babbage A.K."/>
            <person name="Bagguley C.L."/>
            <person name="Bailey J."/>
            <person name="Banerjee R."/>
            <person name="Barker D.J."/>
            <person name="Barlow K.F."/>
            <person name="Bates K."/>
            <person name="Beare D.M."/>
            <person name="Beasley H."/>
            <person name="Beasley O."/>
            <person name="Bird C.P."/>
            <person name="Blakey S.E."/>
            <person name="Bray-Allen S."/>
            <person name="Brook J."/>
            <person name="Brown A.J."/>
            <person name="Brown J.Y."/>
            <person name="Burford D.C."/>
            <person name="Burrill W."/>
            <person name="Burton J."/>
            <person name="Carder C."/>
            <person name="Carter N.P."/>
            <person name="Chapman J.C."/>
            <person name="Clark S.Y."/>
            <person name="Clark G."/>
            <person name="Clee C.M."/>
            <person name="Clegg S."/>
            <person name="Cobley V."/>
            <person name="Collier R.E."/>
            <person name="Collins J.E."/>
            <person name="Colman L.K."/>
            <person name="Corby N.R."/>
            <person name="Coville G.J."/>
            <person name="Culley K.M."/>
            <person name="Dhami P."/>
            <person name="Davies J."/>
            <person name="Dunn M."/>
            <person name="Earthrowl M.E."/>
            <person name="Ellington A.E."/>
            <person name="Evans K.A."/>
            <person name="Faulkner L."/>
            <person name="Francis M.D."/>
            <person name="Frankish A."/>
            <person name="Frankland J."/>
            <person name="French L."/>
            <person name="Garner P."/>
            <person name="Garnett J."/>
            <person name="Ghori M.J."/>
            <person name="Gilby L.M."/>
            <person name="Gillson C.J."/>
            <person name="Glithero R.J."/>
            <person name="Grafham D.V."/>
            <person name="Grant M."/>
            <person name="Gribble S."/>
            <person name="Griffiths C."/>
            <person name="Griffiths M.N.D."/>
            <person name="Hall R."/>
            <person name="Halls K.S."/>
            <person name="Hammond S."/>
            <person name="Harley J.L."/>
            <person name="Hart E.A."/>
            <person name="Heath P.D."/>
            <person name="Heathcott R."/>
            <person name="Holmes S.J."/>
            <person name="Howden P.J."/>
            <person name="Howe K.L."/>
            <person name="Howell G.R."/>
            <person name="Huckle E."/>
            <person name="Humphray S.J."/>
            <person name="Humphries M.D."/>
            <person name="Hunt A.R."/>
            <person name="Johnson C.M."/>
            <person name="Joy A.A."/>
            <person name="Kay M."/>
            <person name="Keenan S.J."/>
            <person name="Kimberley A.M."/>
            <person name="King A."/>
            <person name="Laird G.K."/>
            <person name="Langford C."/>
            <person name="Lawlor S."/>
            <person name="Leongamornlert D.A."/>
            <person name="Leversha M."/>
            <person name="Lloyd C.R."/>
            <person name="Lloyd D.M."/>
            <person name="Loveland J.E."/>
            <person name="Lovell J."/>
            <person name="Martin S."/>
            <person name="Mashreghi-Mohammadi M."/>
            <person name="Maslen G.L."/>
            <person name="Matthews L."/>
            <person name="McCann O.T."/>
            <person name="McLaren S.J."/>
            <person name="McLay K."/>
            <person name="McMurray A."/>
            <person name="Moore M.J.F."/>
            <person name="Mullikin J.C."/>
            <person name="Niblett D."/>
            <person name="Nickerson T."/>
            <person name="Novik K.L."/>
            <person name="Oliver K."/>
            <person name="Overton-Larty E.K."/>
            <person name="Parker A."/>
            <person name="Patel R."/>
            <person name="Pearce A.V."/>
            <person name="Peck A.I."/>
            <person name="Phillimore B.J.C.T."/>
            <person name="Phillips S."/>
            <person name="Plumb R.W."/>
            <person name="Porter K.M."/>
            <person name="Ramsey Y."/>
            <person name="Ranby S.A."/>
            <person name="Rice C.M."/>
            <person name="Ross M.T."/>
            <person name="Searle S.M."/>
            <person name="Sehra H.K."/>
            <person name="Sheridan E."/>
            <person name="Skuce C.D."/>
            <person name="Smith S."/>
            <person name="Smith M."/>
            <person name="Spraggon L."/>
            <person name="Squares S.L."/>
            <person name="Steward C.A."/>
            <person name="Sycamore N."/>
            <person name="Tamlyn-Hall G."/>
            <person name="Tester J."/>
            <person name="Theaker A.J."/>
            <person name="Thomas D.W."/>
            <person name="Thorpe A."/>
            <person name="Tracey A."/>
            <person name="Tromans A."/>
            <person name="Tubby B."/>
            <person name="Wall M."/>
            <person name="Wallis J.M."/>
            <person name="West A.P."/>
            <person name="White S.S."/>
            <person name="Whitehead S.L."/>
            <person name="Whittaker H."/>
            <person name="Wild A."/>
            <person name="Willey D.J."/>
            <person name="Wilmer T.E."/>
            <person name="Wood J.M."/>
            <person name="Wray P.W."/>
            <person name="Wyatt J.C."/>
            <person name="Young L."/>
            <person name="Younger R.M."/>
            <person name="Bentley D.R."/>
            <person name="Coulson A."/>
            <person name="Durbin R.M."/>
            <person name="Hubbard T."/>
            <person name="Sulston J.E."/>
            <person name="Dunham I."/>
            <person name="Rogers J."/>
            <person name="Beck S."/>
        </authorList>
    </citation>
    <scope>NUCLEOTIDE SEQUENCE [LARGE SCALE GENOMIC DNA]</scope>
</reference>
<reference key="7">
    <citation type="submission" date="2005-07" db="EMBL/GenBank/DDBJ databases">
        <authorList>
            <person name="Mural R.J."/>
            <person name="Istrail S."/>
            <person name="Sutton G."/>
            <person name="Florea L."/>
            <person name="Halpern A.L."/>
            <person name="Mobarry C.M."/>
            <person name="Lippert R."/>
            <person name="Walenz B."/>
            <person name="Shatkay H."/>
            <person name="Dew I."/>
            <person name="Miller J.R."/>
            <person name="Flanigan M.J."/>
            <person name="Edwards N.J."/>
            <person name="Bolanos R."/>
            <person name="Fasulo D."/>
            <person name="Halldorsson B.V."/>
            <person name="Hannenhalli S."/>
            <person name="Turner R."/>
            <person name="Yooseph S."/>
            <person name="Lu F."/>
            <person name="Nusskern D.R."/>
            <person name="Shue B.C."/>
            <person name="Zheng X.H."/>
            <person name="Zhong F."/>
            <person name="Delcher A.L."/>
            <person name="Huson D.H."/>
            <person name="Kravitz S.A."/>
            <person name="Mouchard L."/>
            <person name="Reinert K."/>
            <person name="Remington K.A."/>
            <person name="Clark A.G."/>
            <person name="Waterman M.S."/>
            <person name="Eichler E.E."/>
            <person name="Adams M.D."/>
            <person name="Hunkapiller M.W."/>
            <person name="Myers E.W."/>
            <person name="Venter J.C."/>
        </authorList>
    </citation>
    <scope>NUCLEOTIDE SEQUENCE [LARGE SCALE GENOMIC DNA]</scope>
</reference>
<reference key="8">
    <citation type="journal article" date="2006" name="Genetics">
        <title>Rapid evolution of major histocompatibility complex class I genes in primates generates new disease alleles in humans via hitchhiking diversity.</title>
        <authorList>
            <person name="Shiina T."/>
            <person name="Ota M."/>
            <person name="Shimizu S."/>
            <person name="Katsuyama Y."/>
            <person name="Hashimoto N."/>
            <person name="Takasu M."/>
            <person name="Anzai T."/>
            <person name="Kulski J.K."/>
            <person name="Kikkawa E."/>
            <person name="Naruse T."/>
            <person name="Kimura N."/>
            <person name="Yanagiya K."/>
            <person name="Watanabe A."/>
            <person name="Hosomichi K."/>
            <person name="Kohara S."/>
            <person name="Iwamoto C."/>
            <person name="Umehara Y."/>
            <person name="Meyer A."/>
            <person name="Wanner V."/>
            <person name="Sano K."/>
            <person name="Macquin C."/>
            <person name="Ikeo K."/>
            <person name="Tokunaga K."/>
            <person name="Gojobori T."/>
            <person name="Inoko H."/>
            <person name="Bahram S."/>
        </authorList>
    </citation>
    <scope>NUCLEOTIDE SEQUENCE [LARGE SCALE GENOMIC DNA]</scope>
    <source>
        <tissue>Peripheral blood leukocyte</tissue>
    </source>
</reference>
<reference key="9">
    <citation type="journal article" date="2004" name="Genome Res.">
        <title>The status, quality, and expansion of the NIH full-length cDNA project: the Mammalian Gene Collection (MGC).</title>
        <authorList>
            <consortium name="The MGC Project Team"/>
        </authorList>
    </citation>
    <scope>NUCLEOTIDE SEQUENCE [LARGE SCALE MRNA] (ISOFORMS 1 AND 2)</scope>
    <source>
        <tissue>Leiomyosarcoma</tissue>
    </source>
</reference>
<reference key="10">
    <citation type="submission" date="2000-03" db="EMBL/GenBank/DDBJ databases">
        <title>The WashU-Merck EST project.</title>
        <authorList>
            <person name="Hillier L."/>
            <person name="Clark N."/>
            <person name="Dubuque T."/>
            <person name="Elliston K."/>
            <person name="Hawkins M."/>
            <person name="Holman M."/>
            <person name="Hultman M."/>
            <person name="Kucaba T."/>
            <person name="Le M."/>
            <person name="Lennon G."/>
            <person name="Marra M."/>
            <person name="Parsons J."/>
            <person name="Rifkin L."/>
            <person name="Rohlfing T."/>
            <person name="Soares M."/>
            <person name="Tan F."/>
            <person name="Trevaskis E."/>
            <person name="Waterston R."/>
            <person name="Williamson A."/>
            <person name="Wohldmann P."/>
            <person name="Wilson R."/>
        </authorList>
    </citation>
    <scope>NUCLEOTIDE SEQUENCE [LARGE SCALE MRNA] OF 1-75 (ISOFORM 3)</scope>
</reference>
<reference key="11">
    <citation type="journal article" date="2002" name="Gene">
        <title>Molecular cloning and characterization of novel tissue-specific isoforms of the human vacuolar H(+)-ATPase C, G and d subunits, and their evaluation in autosomal recessive distal renal tubular acidosis.</title>
        <authorList>
            <person name="Smith A.N."/>
            <person name="Borthwick K.J."/>
            <person name="Karet F.E."/>
        </authorList>
    </citation>
    <scope>TISSUE SPECIFICITY</scope>
</reference>
<reference key="12">
    <citation type="journal article" date="2006" name="J. Proteome Res.">
        <title>Proteomic and bioinformatic characterization of the biogenesis and function of melanosomes.</title>
        <authorList>
            <person name="Chi A."/>
            <person name="Valencia J.C."/>
            <person name="Hu Z.-Z."/>
            <person name="Watabe H."/>
            <person name="Yamaguchi H."/>
            <person name="Mangini N.J."/>
            <person name="Huang H."/>
            <person name="Canfield V.A."/>
            <person name="Cheng K.C."/>
            <person name="Yang F."/>
            <person name="Abe R."/>
            <person name="Yamagishi S."/>
            <person name="Shabanowitz J."/>
            <person name="Hearing V.J."/>
            <person name="Wu C."/>
            <person name="Appella E."/>
            <person name="Hunt D.F."/>
        </authorList>
    </citation>
    <scope>SUBCELLULAR LOCATION [LARGE SCALE ANALYSIS]</scope>
    <source>
        <tissue>Melanoma</tissue>
    </source>
</reference>
<sequence>MASQSQGIQQLLQAEKRAAEKVADARKRKARRLKQAKEEAQMEVEQYRREREHEFQSKQQAAMGSQGNLSAEVEQATRRQVQGMQSSQQRNRERVLAQLLGMVCDVRPQVHPNYRISA</sequence>
<accession>O95670</accession>
<accession>B5MEF0</accession>
<accession>Q2L6F8</accession>
<accession>Q5HYU8</accession>
<accession>Q5RJ63</accession>